<comment type="catalytic activity">
    <reaction evidence="2">
        <text>a primary alcohol + NAD(+) = an aldehyde + NADH + H(+)</text>
        <dbReference type="Rhea" id="RHEA:10736"/>
        <dbReference type="ChEBI" id="CHEBI:15378"/>
        <dbReference type="ChEBI" id="CHEBI:15734"/>
        <dbReference type="ChEBI" id="CHEBI:17478"/>
        <dbReference type="ChEBI" id="CHEBI:57540"/>
        <dbReference type="ChEBI" id="CHEBI:57945"/>
        <dbReference type="EC" id="1.1.1.1"/>
    </reaction>
</comment>
<comment type="catalytic activity">
    <reaction evidence="2">
        <text>a secondary alcohol + NAD(+) = a ketone + NADH + H(+)</text>
        <dbReference type="Rhea" id="RHEA:10740"/>
        <dbReference type="ChEBI" id="CHEBI:15378"/>
        <dbReference type="ChEBI" id="CHEBI:17087"/>
        <dbReference type="ChEBI" id="CHEBI:35681"/>
        <dbReference type="ChEBI" id="CHEBI:57540"/>
        <dbReference type="ChEBI" id="CHEBI:57945"/>
        <dbReference type="EC" id="1.1.1.1"/>
    </reaction>
</comment>
<comment type="subunit">
    <text>Homodimer.</text>
</comment>
<comment type="similarity">
    <text evidence="3">Belongs to the short-chain dehydrogenases/reductases (SDR) family.</text>
</comment>
<protein>
    <recommendedName>
        <fullName>Alcohol dehydrogenase</fullName>
        <ecNumber>1.1.1.1</ecNumber>
    </recommendedName>
</protein>
<reference key="1">
    <citation type="journal article" date="1993" name="Mol. Phylogenet. Evol.">
        <title>Characterization and evolution of the Adh genomic region in Drosophila guanche and Drosophila madeirensis.</title>
        <authorList>
            <person name="Marfany G."/>
            <person name="Gonzalez-Duarte R."/>
        </authorList>
    </citation>
    <scope>NUCLEOTIDE SEQUENCE [GENOMIC DNA]</scope>
</reference>
<proteinExistence type="inferred from homology"/>
<organism>
    <name type="scientific">Drosophila madeirensis</name>
    <name type="common">Fruit fly</name>
    <dbReference type="NCBI Taxonomy" id="30013"/>
    <lineage>
        <taxon>Eukaryota</taxon>
        <taxon>Metazoa</taxon>
        <taxon>Ecdysozoa</taxon>
        <taxon>Arthropoda</taxon>
        <taxon>Hexapoda</taxon>
        <taxon>Insecta</taxon>
        <taxon>Pterygota</taxon>
        <taxon>Neoptera</taxon>
        <taxon>Endopterygota</taxon>
        <taxon>Diptera</taxon>
        <taxon>Brachycera</taxon>
        <taxon>Muscomorpha</taxon>
        <taxon>Ephydroidea</taxon>
        <taxon>Drosophilidae</taxon>
        <taxon>Drosophila</taxon>
        <taxon>Sophophora</taxon>
    </lineage>
</organism>
<name>ADH_DROMD</name>
<dbReference type="EC" id="1.1.1.1"/>
<dbReference type="EMBL" id="X60112">
    <property type="protein sequence ID" value="CAA42709.1"/>
    <property type="molecule type" value="Genomic_DNA"/>
</dbReference>
<dbReference type="PIR" id="C40731">
    <property type="entry name" value="C40731"/>
</dbReference>
<dbReference type="SMR" id="Q09010"/>
<dbReference type="GO" id="GO:0005829">
    <property type="term" value="C:cytosol"/>
    <property type="evidence" value="ECO:0007669"/>
    <property type="project" value="TreeGrafter"/>
</dbReference>
<dbReference type="GO" id="GO:0004022">
    <property type="term" value="F:alcohol dehydrogenase (NAD+) activity"/>
    <property type="evidence" value="ECO:0000250"/>
    <property type="project" value="UniProtKB"/>
</dbReference>
<dbReference type="GO" id="GO:0006066">
    <property type="term" value="P:alcohol metabolic process"/>
    <property type="evidence" value="ECO:0007669"/>
    <property type="project" value="InterPro"/>
</dbReference>
<dbReference type="CDD" id="cd05323">
    <property type="entry name" value="ADH_SDR_c_like"/>
    <property type="match status" value="1"/>
</dbReference>
<dbReference type="FunFam" id="3.40.50.720:FF:000302">
    <property type="entry name" value="Alcohol dehydrogenase"/>
    <property type="match status" value="1"/>
</dbReference>
<dbReference type="Gene3D" id="3.40.50.720">
    <property type="entry name" value="NAD(P)-binding Rossmann-like Domain"/>
    <property type="match status" value="1"/>
</dbReference>
<dbReference type="InterPro" id="IPR002425">
    <property type="entry name" value="ADH_Drosophila-type"/>
</dbReference>
<dbReference type="InterPro" id="IPR036291">
    <property type="entry name" value="NAD(P)-bd_dom_sf"/>
</dbReference>
<dbReference type="InterPro" id="IPR020904">
    <property type="entry name" value="Sc_DH/Rdtase_CS"/>
</dbReference>
<dbReference type="InterPro" id="IPR002347">
    <property type="entry name" value="SDR_fam"/>
</dbReference>
<dbReference type="PANTHER" id="PTHR42901">
    <property type="entry name" value="ALCOHOL DEHYDROGENASE"/>
    <property type="match status" value="1"/>
</dbReference>
<dbReference type="PANTHER" id="PTHR42901:SF1">
    <property type="entry name" value="ALCOHOL DEHYDROGENASE"/>
    <property type="match status" value="1"/>
</dbReference>
<dbReference type="Pfam" id="PF00106">
    <property type="entry name" value="adh_short"/>
    <property type="match status" value="1"/>
</dbReference>
<dbReference type="PRINTS" id="PR01168">
    <property type="entry name" value="ALCDHDRGNASE"/>
</dbReference>
<dbReference type="PRINTS" id="PR01167">
    <property type="entry name" value="INSADHFAMILY"/>
</dbReference>
<dbReference type="PRINTS" id="PR00080">
    <property type="entry name" value="SDRFAMILY"/>
</dbReference>
<dbReference type="SUPFAM" id="SSF51735">
    <property type="entry name" value="NAD(P)-binding Rossmann-fold domains"/>
    <property type="match status" value="1"/>
</dbReference>
<dbReference type="PROSITE" id="PS00061">
    <property type="entry name" value="ADH_SHORT"/>
    <property type="match status" value="1"/>
</dbReference>
<gene>
    <name type="primary">Adh</name>
</gene>
<accession>Q09010</accession>
<keyword id="KW-0520">NAD</keyword>
<keyword id="KW-0560">Oxidoreductase</keyword>
<evidence type="ECO:0000250" key="1"/>
<evidence type="ECO:0000255" key="2">
    <source>
        <dbReference type="PROSITE-ProRule" id="PRU10001"/>
    </source>
</evidence>
<evidence type="ECO:0000305" key="3"/>
<feature type="initiator methionine" description="Removed" evidence="1">
    <location>
        <position position="1"/>
    </location>
</feature>
<feature type="chain" id="PRO_0000054473" description="Alcohol dehydrogenase">
    <location>
        <begin position="2"/>
        <end position="254"/>
    </location>
</feature>
<feature type="active site" description="Proton acceptor" evidence="2">
    <location>
        <position position="151"/>
    </location>
</feature>
<feature type="binding site" evidence="1">
    <location>
        <begin position="10"/>
        <end position="33"/>
    </location>
    <ligand>
        <name>NAD(+)</name>
        <dbReference type="ChEBI" id="CHEBI:57540"/>
    </ligand>
</feature>
<feature type="binding site" evidence="1">
    <location>
        <position position="138"/>
    </location>
    <ligand>
        <name>substrate</name>
    </ligand>
</feature>
<sequence>MSLTNKNVVFVAGLGGIGLDTSRELVKRDLKNLVILDRIDNPAAIAELKAINPKVTVTFYPYDVTVPVAETTKLLKTIFAQIKTIDVLINGAGILDDHQIERTIAVNYTGLVNTTTAILDFWDKRKGGPGGIICNIGSVTGFNAIYQVPVYSGSKAAVVNFTSSLAKLAPITGVTAYTVNPGITKTTLVHKFNSWLDVEPRVAEKLLEHPTQTSQQCAENFVKAIELNKNGAIWKLDLGTLESITWTKHWDSGI</sequence>